<organism>
    <name type="scientific">Cavia porcellus</name>
    <name type="common">Guinea pig</name>
    <dbReference type="NCBI Taxonomy" id="10141"/>
    <lineage>
        <taxon>Eukaryota</taxon>
        <taxon>Metazoa</taxon>
        <taxon>Chordata</taxon>
        <taxon>Craniata</taxon>
        <taxon>Vertebrata</taxon>
        <taxon>Euteleostomi</taxon>
        <taxon>Mammalia</taxon>
        <taxon>Eutheria</taxon>
        <taxon>Euarchontoglires</taxon>
        <taxon>Glires</taxon>
        <taxon>Rodentia</taxon>
        <taxon>Hystricomorpha</taxon>
        <taxon>Caviidae</taxon>
        <taxon>Cavia</taxon>
    </lineage>
</organism>
<proteinExistence type="evidence at protein level"/>
<keyword id="KW-0007">Acetylation</keyword>
<keyword id="KW-0027">Amidation</keyword>
<keyword id="KW-0165">Cleavage on pair of basic residues</keyword>
<keyword id="KW-0903">Direct protein sequencing</keyword>
<keyword id="KW-1015">Disulfide bond</keyword>
<keyword id="KW-0257">Endorphin</keyword>
<keyword id="KW-0325">Glycoprotein</keyword>
<keyword id="KW-0372">Hormone</keyword>
<keyword id="KW-0597">Phosphoprotein</keyword>
<keyword id="KW-1185">Reference proteome</keyword>
<keyword id="KW-0964">Secreted</keyword>
<keyword id="KW-0732">Signal</keyword>
<name>COLI_CAVPO</name>
<feature type="signal peptide" evidence="6">
    <location>
        <begin position="1"/>
        <end position="26"/>
    </location>
</feature>
<feature type="peptide" id="PRO_0000024955" description="NPP">
    <location>
        <begin position="27"/>
        <end position="97"/>
    </location>
</feature>
<feature type="peptide" id="PRO_0000024956" description="Melanotropin gamma">
    <location>
        <begin position="77"/>
        <end position="87"/>
    </location>
</feature>
<feature type="propeptide" id="PRO_0000024957">
    <location>
        <begin position="100"/>
        <end position="122"/>
    </location>
</feature>
<feature type="peptide" id="PRO_0000024958" description="Corticotropin">
    <location>
        <begin position="125"/>
        <end position="163"/>
    </location>
</feature>
<feature type="peptide" id="PRO_0000024959" description="Melanocyte-stimulating hormone alpha">
    <location>
        <begin position="125"/>
        <end position="137"/>
    </location>
</feature>
<feature type="peptide" id="PRO_0000024960" description="Corticotropin-like intermediary peptide">
    <location>
        <begin position="143"/>
        <end position="163"/>
    </location>
</feature>
<feature type="peptide" id="PRO_0000024961" description="Lipotropin beta">
    <location>
        <begin position="166"/>
        <end position="256"/>
    </location>
</feature>
<feature type="peptide" id="PRO_0000024962" description="Lipotropin gamma">
    <location>
        <begin position="166"/>
        <end position="223"/>
    </location>
</feature>
<feature type="peptide" id="PRO_0000024963" description="Melanocyte-stimulating hormone beta">
    <location>
        <begin position="206"/>
        <end position="223"/>
    </location>
</feature>
<feature type="peptide" id="PRO_0000024964" description="Beta-endorphin">
    <location>
        <begin position="226"/>
        <end position="256"/>
    </location>
</feature>
<feature type="peptide" id="PRO_0000024965" description="Met-enkephalin">
    <location>
        <begin position="226"/>
        <end position="230"/>
    </location>
</feature>
<feature type="region of interest" description="Disordered" evidence="7">
    <location>
        <begin position="88"/>
        <end position="120"/>
    </location>
</feature>
<feature type="modified residue" description="Phenylalanine amide" evidence="3">
    <location>
        <position position="87"/>
    </location>
</feature>
<feature type="modified residue" description="N-acetylserine; in Corticotropin" evidence="4">
    <location>
        <position position="125"/>
    </location>
</feature>
<feature type="modified residue" description="Valine amide" evidence="3">
    <location>
        <position position="137"/>
    </location>
</feature>
<feature type="modified residue" description="Phosphoserine" evidence="2">
    <location>
        <position position="155"/>
    </location>
</feature>
<feature type="glycosylation site" description="O-linked (GalNAc...) threonine" evidence="1">
    <location>
        <position position="71"/>
    </location>
</feature>
<feature type="glycosylation site" description="N-linked (GlcNAc...) asparagine" evidence="1">
    <location>
        <position position="91"/>
    </location>
</feature>
<feature type="disulfide bond" evidence="1">
    <location>
        <begin position="28"/>
        <end position="50"/>
    </location>
</feature>
<accession>P19402</accession>
<dbReference type="EMBL" id="S78260">
    <property type="protein sequence ID" value="AAB20814.2"/>
    <property type="molecule type" value="mRNA"/>
</dbReference>
<dbReference type="PIR" id="A54322">
    <property type="entry name" value="A54322"/>
</dbReference>
<dbReference type="SMR" id="P19402"/>
<dbReference type="FunCoup" id="P19402">
    <property type="interactions" value="705"/>
</dbReference>
<dbReference type="STRING" id="10141.ENSCPOP00000020054"/>
<dbReference type="GlyCosmos" id="P19402">
    <property type="glycosylation" value="2 sites, No reported glycans"/>
</dbReference>
<dbReference type="eggNOG" id="ENOG502RZNY">
    <property type="taxonomic scope" value="Eukaryota"/>
</dbReference>
<dbReference type="InParanoid" id="P19402"/>
<dbReference type="Proteomes" id="UP000005447">
    <property type="component" value="Unassembled WGS sequence"/>
</dbReference>
<dbReference type="GO" id="GO:0005615">
    <property type="term" value="C:extracellular space"/>
    <property type="evidence" value="ECO:0007669"/>
    <property type="project" value="TreeGrafter"/>
</dbReference>
<dbReference type="GO" id="GO:0030141">
    <property type="term" value="C:secretory granule"/>
    <property type="evidence" value="ECO:0007669"/>
    <property type="project" value="TreeGrafter"/>
</dbReference>
<dbReference type="GO" id="GO:0001664">
    <property type="term" value="F:G protein-coupled receptor binding"/>
    <property type="evidence" value="ECO:0007669"/>
    <property type="project" value="TreeGrafter"/>
</dbReference>
<dbReference type="GO" id="GO:0005179">
    <property type="term" value="F:hormone activity"/>
    <property type="evidence" value="ECO:0007669"/>
    <property type="project" value="UniProtKB-KW"/>
</dbReference>
<dbReference type="GO" id="GO:0007218">
    <property type="term" value="P:neuropeptide signaling pathway"/>
    <property type="evidence" value="ECO:0007669"/>
    <property type="project" value="UniProtKB-KW"/>
</dbReference>
<dbReference type="GO" id="GO:2000852">
    <property type="term" value="P:regulation of corticosterone secretion"/>
    <property type="evidence" value="ECO:0007669"/>
    <property type="project" value="TreeGrafter"/>
</dbReference>
<dbReference type="InterPro" id="IPR013531">
    <property type="entry name" value="Mcrtin_ACTH_cent"/>
</dbReference>
<dbReference type="InterPro" id="IPR013593">
    <property type="entry name" value="Melanocortin_N"/>
</dbReference>
<dbReference type="InterPro" id="IPR013532">
    <property type="entry name" value="Opioid_neuropept"/>
</dbReference>
<dbReference type="InterPro" id="IPR001941">
    <property type="entry name" value="PMOC"/>
</dbReference>
<dbReference type="InterPro" id="IPR050878">
    <property type="entry name" value="POMC-derived_peptides"/>
</dbReference>
<dbReference type="PANTHER" id="PTHR11416">
    <property type="entry name" value="PRO-OPIOMELANOCORTIN"/>
    <property type="match status" value="1"/>
</dbReference>
<dbReference type="PANTHER" id="PTHR11416:SF7">
    <property type="entry name" value="PRO-OPIOMELANOCORTIN"/>
    <property type="match status" value="1"/>
</dbReference>
<dbReference type="Pfam" id="PF00976">
    <property type="entry name" value="ACTH_domain"/>
    <property type="match status" value="2"/>
</dbReference>
<dbReference type="Pfam" id="PF08384">
    <property type="entry name" value="NPP"/>
    <property type="match status" value="1"/>
</dbReference>
<dbReference type="Pfam" id="PF08035">
    <property type="entry name" value="Op_neuropeptide"/>
    <property type="match status" value="1"/>
</dbReference>
<dbReference type="PRINTS" id="PR00383">
    <property type="entry name" value="MELANOCORTIN"/>
</dbReference>
<dbReference type="SMART" id="SM01363">
    <property type="entry name" value="ACTH_domain"/>
    <property type="match status" value="2"/>
</dbReference>
<dbReference type="SMART" id="SM01364">
    <property type="entry name" value="NPP"/>
    <property type="match status" value="1"/>
</dbReference>
<dbReference type="SMART" id="SM01365">
    <property type="entry name" value="Op_neuropeptide"/>
    <property type="match status" value="1"/>
</dbReference>
<evidence type="ECO:0000250" key="1"/>
<evidence type="ECO:0000250" key="2">
    <source>
        <dbReference type="UniProtKB" id="P01189"/>
    </source>
</evidence>
<evidence type="ECO:0000250" key="3">
    <source>
        <dbReference type="UniProtKB" id="P01190"/>
    </source>
</evidence>
<evidence type="ECO:0000250" key="4">
    <source>
        <dbReference type="UniProtKB" id="P01191"/>
    </source>
</evidence>
<evidence type="ECO:0000250" key="5">
    <source>
        <dbReference type="UniProtKB" id="P01193"/>
    </source>
</evidence>
<evidence type="ECO:0000255" key="6"/>
<evidence type="ECO:0000256" key="7">
    <source>
        <dbReference type="SAM" id="MobiDB-lite"/>
    </source>
</evidence>
<evidence type="ECO:0000305" key="8"/>
<reference key="1">
    <citation type="journal article" date="1991" name="Mol. Cell. Endocrinol.">
        <title>Molecular cloning and sequencing of a guinea-pig pro-opiomelanocortin cDNA.</title>
        <authorList>
            <person name="Keightley M.C."/>
            <person name="Funder J.W."/>
            <person name="Fuller P.J."/>
        </authorList>
    </citation>
    <scope>NUCLEOTIDE SEQUENCE [MRNA]</scope>
    <source>
        <tissue>Pituitary</tissue>
    </source>
</reference>
<reference key="2">
    <citation type="journal article" date="1987" name="J. Endocrinol.">
        <title>Isolation, amino acid sequence and action of guinea-pig ACTH on aldosterone production by glomerulosa cells.</title>
        <authorList>
            <person name="Smith A.I."/>
            <person name="Wallace C.A."/>
            <person name="Moritz R.L."/>
            <person name="Simpson R.J."/>
            <person name="Schmauk-White L.B."/>
            <person name="Woodcock E.A."/>
            <person name="Funder J.W."/>
        </authorList>
    </citation>
    <scope>PROTEIN SEQUENCE OF 125-163</scope>
</reference>
<protein>
    <recommendedName>
        <fullName>Pro-opiomelanocortin</fullName>
        <shortName>POMC</shortName>
    </recommendedName>
    <alternativeName>
        <fullName>Corticotropin-lipotropin</fullName>
    </alternativeName>
    <component>
        <recommendedName>
            <fullName>NPP</fullName>
        </recommendedName>
    </component>
    <component>
        <recommendedName>
            <fullName>Melanotropin gamma</fullName>
        </recommendedName>
        <alternativeName>
            <fullName>Gamma-MSH</fullName>
        </alternativeName>
    </component>
    <component>
        <recommendedName>
            <fullName>Corticotropin</fullName>
        </recommendedName>
        <alternativeName>
            <fullName>Adrenocorticotropic hormone</fullName>
            <shortName>ACTH</shortName>
        </alternativeName>
    </component>
    <component>
        <recommendedName>
            <fullName>Melanocyte-stimulating hormone alpha</fullName>
            <shortName>Alpha-MSH</shortName>
        </recommendedName>
        <alternativeName>
            <fullName>Melanotropin alpha</fullName>
        </alternativeName>
    </component>
    <component>
        <recommendedName>
            <fullName>Corticotropin-like intermediary peptide</fullName>
            <shortName>CLIP</shortName>
        </recommendedName>
    </component>
    <component>
        <recommendedName>
            <fullName>Lipotropin beta</fullName>
        </recommendedName>
        <alternativeName>
            <fullName>Beta-LPH</fullName>
        </alternativeName>
    </component>
    <component>
        <recommendedName>
            <fullName>Lipotropin gamma</fullName>
        </recommendedName>
        <alternativeName>
            <fullName>Gamma-LPH</fullName>
        </alternativeName>
    </component>
    <component>
        <recommendedName>
            <fullName>Melanocyte-stimulating hormone beta</fullName>
            <shortName>Beta-MSH</shortName>
        </recommendedName>
        <alternativeName>
            <fullName>Melanotropin beta</fullName>
        </alternativeName>
    </component>
    <component>
        <recommendedName>
            <fullName>Beta-endorphin</fullName>
        </recommendedName>
    </component>
    <component>
        <recommendedName>
            <fullName>Met-enkephalin</fullName>
        </recommendedName>
    </component>
</protein>
<gene>
    <name type="primary">POMC</name>
</gene>
<sequence>MPRSCYSRSGTLLLALLLQISMEVRGWCLESSQCQDLTTERHLLECLRACKPDLSAETPVFPGGADEQTPTESPRKYVTGHFRWGRFGRGNSSGASQKREEEAAAADPGFHGDGVEPGLREDKRSYSMEHFRWGKPVGKKRRPVKVYANGAEEESAEAFPLEFKRELTGERPAAAPGPDGLGFGLVAEAEAEAAAAEKKDAAEKKDDGSYRMEHFRWGTPRKGKRYGGFMTSEKSQTPLVTLFKNAIVKNAHKKGQ</sequence>
<comment type="function">
    <text>ACTH stimulates the adrenal glands to release cortisol.</text>
</comment>
<comment type="function">
    <text>MSH (melanocyte-stimulating hormone) increases the pigmentation of skin by increasing melanin production in melanocytes.</text>
</comment>
<comment type="function">
    <text>Beta-endorphin and Met-enkephalin are endogenous opiates.</text>
</comment>
<comment type="function">
    <molecule>Corticotropin</molecule>
    <text>Stimulates the adrenal glands to release cortisol.</text>
</comment>
<comment type="function">
    <molecule>Melanocyte-stimulating hormone alpha</molecule>
    <text>Anorexigenic peptide. Increases the pigmentation of skin by increasing melanin production in melanocytes.</text>
</comment>
<comment type="function">
    <molecule>Melanocyte-stimulating hormone beta</molecule>
    <text>Increases the pigmentation of skin by increasing melanin production in melanocytes.</text>
</comment>
<comment type="function">
    <molecule>Beta-endorphin</molecule>
    <text>Endogenous orexigenic opiate.</text>
</comment>
<comment type="function">
    <molecule>Met-enkephalin</molecule>
    <text>Endogenous opiate.</text>
</comment>
<comment type="subcellular location">
    <subcellularLocation>
        <location evidence="5">Secreted</location>
    </subcellularLocation>
    <text evidence="5">Melanocyte-stimulating hormone alpha and beta-endorphin are stored in separate granules in hypothalamic POMC neurons, suggesting that secretion may be under the control of different regulatory mechanisms.</text>
</comment>
<comment type="tissue specificity">
    <text>ACTH and MSH are produced by the pituitary gland.</text>
</comment>
<comment type="PTM">
    <text>Specific enzymatic cleavages at paired basic residues yield the different active peptides.</text>
</comment>
<comment type="similarity">
    <text evidence="8">Belongs to the POMC family.</text>
</comment>